<name>NAPA_PARPN</name>
<feature type="signal peptide" description="Tat-type signal" evidence="1">
    <location>
        <begin position="1"/>
        <end position="31"/>
    </location>
</feature>
<feature type="chain" id="PRO_0000019172" description="Periplasmic nitrate reductase" evidence="1">
    <location>
        <begin position="32"/>
        <end position="831"/>
    </location>
</feature>
<feature type="domain" description="4Fe-4S Mo/W bis-MGD-type" evidence="1">
    <location>
        <begin position="41"/>
        <end position="97"/>
    </location>
</feature>
<feature type="binding site" evidence="1">
    <location>
        <position position="48"/>
    </location>
    <ligand>
        <name>[4Fe-4S] cluster</name>
        <dbReference type="ChEBI" id="CHEBI:49883"/>
    </ligand>
</feature>
<feature type="binding site" evidence="1">
    <location>
        <position position="51"/>
    </location>
    <ligand>
        <name>[4Fe-4S] cluster</name>
        <dbReference type="ChEBI" id="CHEBI:49883"/>
    </ligand>
</feature>
<feature type="binding site" evidence="1">
    <location>
        <position position="55"/>
    </location>
    <ligand>
        <name>[4Fe-4S] cluster</name>
        <dbReference type="ChEBI" id="CHEBI:49883"/>
    </ligand>
</feature>
<feature type="binding site" evidence="1">
    <location>
        <position position="83"/>
    </location>
    <ligand>
        <name>[4Fe-4S] cluster</name>
        <dbReference type="ChEBI" id="CHEBI:49883"/>
    </ligand>
</feature>
<feature type="binding site" evidence="1">
    <location>
        <position position="85"/>
    </location>
    <ligand>
        <name>Mo-bis(molybdopterin guanine dinucleotide)</name>
        <dbReference type="ChEBI" id="CHEBI:60539"/>
    </ligand>
</feature>
<feature type="binding site" evidence="1">
    <location>
        <position position="152"/>
    </location>
    <ligand>
        <name>Mo-bis(molybdopterin guanine dinucleotide)</name>
        <dbReference type="ChEBI" id="CHEBI:60539"/>
    </ligand>
</feature>
<feature type="binding site" evidence="1">
    <location>
        <position position="177"/>
    </location>
    <ligand>
        <name>Mo-bis(molybdopterin guanine dinucleotide)</name>
        <dbReference type="ChEBI" id="CHEBI:60539"/>
    </ligand>
</feature>
<feature type="binding site" evidence="1">
    <location>
        <position position="181"/>
    </location>
    <ligand>
        <name>Mo-bis(molybdopterin guanine dinucleotide)</name>
        <dbReference type="ChEBI" id="CHEBI:60539"/>
    </ligand>
</feature>
<feature type="binding site" evidence="1">
    <location>
        <begin position="214"/>
        <end position="221"/>
    </location>
    <ligand>
        <name>Mo-bis(molybdopterin guanine dinucleotide)</name>
        <dbReference type="ChEBI" id="CHEBI:60539"/>
    </ligand>
</feature>
<feature type="binding site" evidence="1">
    <location>
        <begin position="245"/>
        <end position="249"/>
    </location>
    <ligand>
        <name>Mo-bis(molybdopterin guanine dinucleotide)</name>
        <dbReference type="ChEBI" id="CHEBI:60539"/>
    </ligand>
</feature>
<feature type="binding site" evidence="1">
    <location>
        <begin position="264"/>
        <end position="266"/>
    </location>
    <ligand>
        <name>Mo-bis(molybdopterin guanine dinucleotide)</name>
        <dbReference type="ChEBI" id="CHEBI:60539"/>
    </ligand>
</feature>
<feature type="binding site" evidence="1">
    <location>
        <position position="375"/>
    </location>
    <ligand>
        <name>Mo-bis(molybdopterin guanine dinucleotide)</name>
        <dbReference type="ChEBI" id="CHEBI:60539"/>
    </ligand>
</feature>
<feature type="binding site" evidence="1">
    <location>
        <position position="379"/>
    </location>
    <ligand>
        <name>Mo-bis(molybdopterin guanine dinucleotide)</name>
        <dbReference type="ChEBI" id="CHEBI:60539"/>
    </ligand>
</feature>
<feature type="binding site" evidence="1">
    <location>
        <position position="485"/>
    </location>
    <ligand>
        <name>Mo-bis(molybdopterin guanine dinucleotide)</name>
        <dbReference type="ChEBI" id="CHEBI:60539"/>
    </ligand>
</feature>
<feature type="binding site" evidence="1">
    <location>
        <begin position="511"/>
        <end position="512"/>
    </location>
    <ligand>
        <name>Mo-bis(molybdopterin guanine dinucleotide)</name>
        <dbReference type="ChEBI" id="CHEBI:60539"/>
    </ligand>
</feature>
<feature type="binding site" evidence="1">
    <location>
        <position position="534"/>
    </location>
    <ligand>
        <name>Mo-bis(molybdopterin guanine dinucleotide)</name>
        <dbReference type="ChEBI" id="CHEBI:60539"/>
    </ligand>
</feature>
<feature type="binding site" evidence="1">
    <location>
        <position position="561"/>
    </location>
    <ligand>
        <name>Mo-bis(molybdopterin guanine dinucleotide)</name>
        <dbReference type="ChEBI" id="CHEBI:60539"/>
    </ligand>
</feature>
<feature type="binding site" evidence="1">
    <location>
        <begin position="721"/>
        <end position="730"/>
    </location>
    <ligand>
        <name>Mo-bis(molybdopterin guanine dinucleotide)</name>
        <dbReference type="ChEBI" id="CHEBI:60539"/>
    </ligand>
</feature>
<feature type="binding site" evidence="1">
    <location>
        <position position="797"/>
    </location>
    <ligand>
        <name>substrate</name>
    </ligand>
</feature>
<feature type="binding site" evidence="1">
    <location>
        <position position="805"/>
    </location>
    <ligand>
        <name>Mo-bis(molybdopterin guanine dinucleotide)</name>
        <dbReference type="ChEBI" id="CHEBI:60539"/>
    </ligand>
</feature>
<feature type="binding site" evidence="1">
    <location>
        <position position="822"/>
    </location>
    <ligand>
        <name>Mo-bis(molybdopterin guanine dinucleotide)</name>
        <dbReference type="ChEBI" id="CHEBI:60539"/>
    </ligand>
</feature>
<feature type="sequence conflict" description="In Ref. 1; AA sequence." evidence="2" ref="1">
    <original>T</original>
    <variation>D</variation>
    <location>
        <position position="128"/>
    </location>
</feature>
<proteinExistence type="evidence at protein level"/>
<comment type="function">
    <text evidence="1">Catalytic subunit of the periplasmic nitrate reductase complex NapAB. Receives electrons from NapB and catalyzes the reduction of nitrate to nitrite.</text>
</comment>
<comment type="catalytic activity">
    <reaction evidence="1">
        <text>2 Fe(II)-[cytochrome] + nitrate + 2 H(+) = 2 Fe(III)-[cytochrome] + nitrite + H2O</text>
        <dbReference type="Rhea" id="RHEA:12909"/>
        <dbReference type="Rhea" id="RHEA-COMP:11777"/>
        <dbReference type="Rhea" id="RHEA-COMP:11778"/>
        <dbReference type="ChEBI" id="CHEBI:15377"/>
        <dbReference type="ChEBI" id="CHEBI:15378"/>
        <dbReference type="ChEBI" id="CHEBI:16301"/>
        <dbReference type="ChEBI" id="CHEBI:17632"/>
        <dbReference type="ChEBI" id="CHEBI:29033"/>
        <dbReference type="ChEBI" id="CHEBI:29034"/>
        <dbReference type="EC" id="1.9.6.1"/>
    </reaction>
</comment>
<comment type="cofactor">
    <cofactor evidence="1">
        <name>[4Fe-4S] cluster</name>
        <dbReference type="ChEBI" id="CHEBI:49883"/>
    </cofactor>
    <text evidence="1">Binds 1 [4Fe-4S] cluster.</text>
</comment>
<comment type="cofactor">
    <cofactor evidence="1">
        <name>Mo-bis(molybdopterin guanine dinucleotide)</name>
        <dbReference type="ChEBI" id="CHEBI:60539"/>
    </cofactor>
    <text evidence="1">Binds 1 molybdenum-bis(molybdopterin guanine dinucleotide) (Mo-bis-MGD) cofactor per subunit.</text>
</comment>
<comment type="subunit">
    <text evidence="1">Component of the periplasmic nitrate reductase NapAB complex composed of NapA and NapB.</text>
</comment>
<comment type="subcellular location">
    <subcellularLocation>
        <location evidence="1">Periplasm</location>
    </subcellularLocation>
</comment>
<comment type="PTM">
    <text evidence="1">Predicted to be exported by the Tat system. The position of the signal peptide cleavage has not been experimentally proven.</text>
</comment>
<comment type="similarity">
    <text evidence="1">Belongs to the prokaryotic molybdopterin-containing oxidoreductase family. NasA/NapA/NarB subfamily.</text>
</comment>
<evidence type="ECO:0000255" key="1">
    <source>
        <dbReference type="HAMAP-Rule" id="MF_01630"/>
    </source>
</evidence>
<evidence type="ECO:0000305" key="2"/>
<organism>
    <name type="scientific">Paracoccus pantotrophus</name>
    <name type="common">Thiosphaera pantotropha</name>
    <dbReference type="NCBI Taxonomy" id="82367"/>
    <lineage>
        <taxon>Bacteria</taxon>
        <taxon>Pseudomonadati</taxon>
        <taxon>Pseudomonadota</taxon>
        <taxon>Alphaproteobacteria</taxon>
        <taxon>Rhodobacterales</taxon>
        <taxon>Paracoccaceae</taxon>
        <taxon>Paracoccus</taxon>
    </lineage>
</organism>
<protein>
    <recommendedName>
        <fullName evidence="1">Periplasmic nitrate reductase</fullName>
        <ecNumber evidence="1">1.9.6.1</ecNumber>
    </recommendedName>
</protein>
<dbReference type="EC" id="1.9.6.1" evidence="1"/>
<dbReference type="EMBL" id="Z36773">
    <property type="protein sequence ID" value="CAA85346.1"/>
    <property type="molecule type" value="Genomic_DNA"/>
</dbReference>
<dbReference type="PIR" id="S50163">
    <property type="entry name" value="S50163"/>
</dbReference>
<dbReference type="SMR" id="Q56350"/>
<dbReference type="STRING" id="82367.SAMN04244567_03482"/>
<dbReference type="eggNOG" id="COG0243">
    <property type="taxonomic scope" value="Bacteria"/>
</dbReference>
<dbReference type="BRENDA" id="1.9.6.1">
    <property type="organism ID" value="4531"/>
</dbReference>
<dbReference type="GO" id="GO:0016020">
    <property type="term" value="C:membrane"/>
    <property type="evidence" value="ECO:0007669"/>
    <property type="project" value="TreeGrafter"/>
</dbReference>
<dbReference type="GO" id="GO:0009325">
    <property type="term" value="C:nitrate reductase complex"/>
    <property type="evidence" value="ECO:0007669"/>
    <property type="project" value="TreeGrafter"/>
</dbReference>
<dbReference type="GO" id="GO:0042597">
    <property type="term" value="C:periplasmic space"/>
    <property type="evidence" value="ECO:0007669"/>
    <property type="project" value="UniProtKB-SubCell"/>
</dbReference>
<dbReference type="GO" id="GO:0051539">
    <property type="term" value="F:4 iron, 4 sulfur cluster binding"/>
    <property type="evidence" value="ECO:0007669"/>
    <property type="project" value="UniProtKB-KW"/>
</dbReference>
<dbReference type="GO" id="GO:0009055">
    <property type="term" value="F:electron transfer activity"/>
    <property type="evidence" value="ECO:0007669"/>
    <property type="project" value="UniProtKB-UniRule"/>
</dbReference>
<dbReference type="GO" id="GO:0005506">
    <property type="term" value="F:iron ion binding"/>
    <property type="evidence" value="ECO:0007669"/>
    <property type="project" value="UniProtKB-UniRule"/>
</dbReference>
<dbReference type="GO" id="GO:0030151">
    <property type="term" value="F:molybdenum ion binding"/>
    <property type="evidence" value="ECO:0007669"/>
    <property type="project" value="InterPro"/>
</dbReference>
<dbReference type="GO" id="GO:0043546">
    <property type="term" value="F:molybdopterin cofactor binding"/>
    <property type="evidence" value="ECO:0007669"/>
    <property type="project" value="InterPro"/>
</dbReference>
<dbReference type="GO" id="GO:0050140">
    <property type="term" value="F:nitrate reductase (cytochrome) activity"/>
    <property type="evidence" value="ECO:0007669"/>
    <property type="project" value="UniProtKB-EC"/>
</dbReference>
<dbReference type="GO" id="GO:0045333">
    <property type="term" value="P:cellular respiration"/>
    <property type="evidence" value="ECO:0007669"/>
    <property type="project" value="UniProtKB-ARBA"/>
</dbReference>
<dbReference type="GO" id="GO:0006777">
    <property type="term" value="P:Mo-molybdopterin cofactor biosynthetic process"/>
    <property type="evidence" value="ECO:0007669"/>
    <property type="project" value="UniProtKB-UniRule"/>
</dbReference>
<dbReference type="GO" id="GO:0042128">
    <property type="term" value="P:nitrate assimilation"/>
    <property type="evidence" value="ECO:0007669"/>
    <property type="project" value="UniProtKB-UniRule"/>
</dbReference>
<dbReference type="CDD" id="cd02791">
    <property type="entry name" value="MopB_CT_Nitrate-R-NapA-like"/>
    <property type="match status" value="1"/>
</dbReference>
<dbReference type="CDD" id="cd02754">
    <property type="entry name" value="MopB_Nitrate-R-NapA-like"/>
    <property type="match status" value="1"/>
</dbReference>
<dbReference type="FunFam" id="2.40.40.20:FF:000005">
    <property type="entry name" value="Periplasmic nitrate reductase"/>
    <property type="match status" value="1"/>
</dbReference>
<dbReference type="Gene3D" id="2.40.40.20">
    <property type="match status" value="1"/>
</dbReference>
<dbReference type="Gene3D" id="3.30.200.210">
    <property type="match status" value="1"/>
</dbReference>
<dbReference type="Gene3D" id="3.40.50.740">
    <property type="match status" value="1"/>
</dbReference>
<dbReference type="Gene3D" id="3.40.228.10">
    <property type="entry name" value="Dimethylsulfoxide Reductase, domain 2"/>
    <property type="match status" value="1"/>
</dbReference>
<dbReference type="HAMAP" id="MF_01630">
    <property type="entry name" value="Nitrate_reduct_NapA"/>
    <property type="match status" value="1"/>
</dbReference>
<dbReference type="InterPro" id="IPR009010">
    <property type="entry name" value="Asp_de-COase-like_dom_sf"/>
</dbReference>
<dbReference type="InterPro" id="IPR041957">
    <property type="entry name" value="CT_Nitrate-R-NapA-like"/>
</dbReference>
<dbReference type="InterPro" id="IPR006657">
    <property type="entry name" value="MoPterin_dinucl-bd_dom"/>
</dbReference>
<dbReference type="InterPro" id="IPR006656">
    <property type="entry name" value="Mopterin_OxRdtase"/>
</dbReference>
<dbReference type="InterPro" id="IPR006963">
    <property type="entry name" value="Mopterin_OxRdtase_4Fe-4S_dom"/>
</dbReference>
<dbReference type="InterPro" id="IPR027467">
    <property type="entry name" value="MopterinOxRdtase_cofactor_BS"/>
</dbReference>
<dbReference type="InterPro" id="IPR010051">
    <property type="entry name" value="Periplasm_NO3_reductase_lsu"/>
</dbReference>
<dbReference type="InterPro" id="IPR050123">
    <property type="entry name" value="Prok_molybdopt-oxidoreductase"/>
</dbReference>
<dbReference type="InterPro" id="IPR006311">
    <property type="entry name" value="TAT_signal"/>
</dbReference>
<dbReference type="InterPro" id="IPR019546">
    <property type="entry name" value="TAT_signal_bac_arc"/>
</dbReference>
<dbReference type="NCBIfam" id="TIGR01706">
    <property type="entry name" value="NAPA"/>
    <property type="match status" value="1"/>
</dbReference>
<dbReference type="NCBIfam" id="NF010055">
    <property type="entry name" value="PRK13532.1"/>
    <property type="match status" value="1"/>
</dbReference>
<dbReference type="NCBIfam" id="TIGR01409">
    <property type="entry name" value="TAT_signal_seq"/>
    <property type="match status" value="1"/>
</dbReference>
<dbReference type="PANTHER" id="PTHR43105:SF11">
    <property type="entry name" value="PERIPLASMIC NITRATE REDUCTASE"/>
    <property type="match status" value="1"/>
</dbReference>
<dbReference type="PANTHER" id="PTHR43105">
    <property type="entry name" value="RESPIRATORY NITRATE REDUCTASE"/>
    <property type="match status" value="1"/>
</dbReference>
<dbReference type="Pfam" id="PF04879">
    <property type="entry name" value="Molybdop_Fe4S4"/>
    <property type="match status" value="1"/>
</dbReference>
<dbReference type="Pfam" id="PF00384">
    <property type="entry name" value="Molybdopterin"/>
    <property type="match status" value="1"/>
</dbReference>
<dbReference type="Pfam" id="PF01568">
    <property type="entry name" value="Molydop_binding"/>
    <property type="match status" value="1"/>
</dbReference>
<dbReference type="SMART" id="SM00926">
    <property type="entry name" value="Molybdop_Fe4S4"/>
    <property type="match status" value="1"/>
</dbReference>
<dbReference type="SUPFAM" id="SSF50692">
    <property type="entry name" value="ADC-like"/>
    <property type="match status" value="1"/>
</dbReference>
<dbReference type="SUPFAM" id="SSF53706">
    <property type="entry name" value="Formate dehydrogenase/DMSO reductase, domains 1-3"/>
    <property type="match status" value="1"/>
</dbReference>
<dbReference type="PROSITE" id="PS51669">
    <property type="entry name" value="4FE4S_MOW_BIS_MGD"/>
    <property type="match status" value="1"/>
</dbReference>
<dbReference type="PROSITE" id="PS00551">
    <property type="entry name" value="MOLYBDOPTERIN_PROK_1"/>
    <property type="match status" value="1"/>
</dbReference>
<dbReference type="PROSITE" id="PS51318">
    <property type="entry name" value="TAT"/>
    <property type="match status" value="1"/>
</dbReference>
<sequence>MTISRRDLLKAQAAGIAAMAANIPLSSQAPAVPGGVESLQITWSKAPCRFCGTGCGVMVGVKEGRVVATHGDLLAEVNRGLNCVKGYFLSKIMYGADRLTQPLLRKKDGVYAKDGEFTPVSWEEAFDTMAAQAKRVLRDKGPTALGMFGSGQWTIFEGYAATKLMRAGFRSNNLDPNARHCMASAAYAFMRTFGMDEPMGCYDDFEAADAFVLWGSNMAEMHPILWTRVADRRLGHPHVKVAVLSTFTHRSSDLADIPIVFKPGTDLAILNYIANHIIQTGRVNRDFVDRHTTFVAGATGIGYGLRDDDPREMAARTAEDPAATTPSTFEEFAELVSEYTLDKVSELSGVEPAFLEQLAELYADPDRKVMSLWTMGFNQHVRGVWANQMVYNLHLLTGKISEPGNSPFSLTGQASACGTARQVGTFRHRLPSDMTVTNPERRQDAEEIWRIPHGVIPEQPGLHAVAQDRALHDGTLNFYWIQVNNNLQASPNNDGEAWPGYRNPDNFIVVSDAYPTVTALAADLILPAAMWVEKEGAYGNAERRTHVWHQLVEAPGEARSDLWQMMEFSTRFTTDEVWPEEILAANPNYRGQSLFDVLFRNGSVDRFDLSELNPVTPTAESNAFGFYVQKGLFEEYAPFGRGHGHDLAPYDTYHEVRGLRWPVVDGKETLWRYREGLDPYVEPGAGVQFYGNPDGKARIIAVPYEPPAEPPDEEYNIWLVTGRVLEHWHSGSMTMRVPELYRAFPGARCFMNPEDARDMGFNQGAEVRIVSRRGEIRSRVETRGRNRMPRGVVFVPWFDASQLINKVTLDATDPISKQTDFKKCAVKILPV</sequence>
<gene>
    <name evidence="1" type="primary">napA</name>
</gene>
<accession>Q56350</accession>
<keyword id="KW-0004">4Fe-4S</keyword>
<keyword id="KW-0903">Direct protein sequencing</keyword>
<keyword id="KW-0249">Electron transport</keyword>
<keyword id="KW-0408">Iron</keyword>
<keyword id="KW-0411">Iron-sulfur</keyword>
<keyword id="KW-0479">Metal-binding</keyword>
<keyword id="KW-0500">Molybdenum</keyword>
<keyword id="KW-0534">Nitrate assimilation</keyword>
<keyword id="KW-0560">Oxidoreductase</keyword>
<keyword id="KW-0574">Periplasm</keyword>
<keyword id="KW-0732">Signal</keyword>
<keyword id="KW-0813">Transport</keyword>
<reference key="1">
    <citation type="journal article" date="1995" name="Biochem. J.">
        <title>The napEDABC gene cluster encoding the periplasmic nitrate reductase system of Thiosphaera pantotropha.</title>
        <authorList>
            <person name="Berks B.C."/>
            <person name="Richardson D.J."/>
            <person name="Reilly A."/>
            <person name="Willis A.C."/>
            <person name="Ferguson S.J."/>
        </authorList>
    </citation>
    <scope>NUCLEOTIDE SEQUENCE [GENOMIC DNA]</scope>
    <scope>PARTIAL PROTEIN SEQUENCE</scope>
    <source>
        <strain>ATCC 35512 / DSM 2944 / CIP 106514 / LMD 82.5 / NBRC 102493 / NCCB 82005 / GB17</strain>
    </source>
</reference>
<reference key="2">
    <citation type="journal article" date="1994" name="Eur. J. Biochem.">
        <title>Purification and characterization of the periplasmic nitrate reductase from Thiosphaera pantotropha.</title>
        <authorList>
            <person name="Berks B.C."/>
            <person name="Richardson D.J."/>
            <person name="Robinson C."/>
            <person name="Reilly A."/>
            <person name="Aplin R.T."/>
            <person name="Ferguson S.J."/>
        </authorList>
    </citation>
    <scope>CHARACTERIZATION</scope>
    <source>
        <strain>M-6</strain>
    </source>
</reference>
<reference key="3">
    <citation type="journal article" date="1994" name="FEBS Lett.">
        <title>Characterization of the paramagnetic iron-containing redox centres of Thiosphaera pantotropha periplasmic nitrate reductase.</title>
        <authorList>
            <person name="Breton J."/>
            <person name="Berks B.C."/>
            <person name="Reilly A."/>
            <person name="Thomson A.J."/>
            <person name="Ferguson S.J."/>
            <person name="Richardson D.J."/>
        </authorList>
    </citation>
    <scope>CHARACTERIZATION</scope>
    <scope>PROTEIN SEQUENCE OF 642-655 AND 699-715</scope>
    <source>
        <strain>M-6</strain>
    </source>
</reference>